<organism>
    <name type="scientific">Escherichia coli O7:K1 (strain IAI39 / ExPEC)</name>
    <dbReference type="NCBI Taxonomy" id="585057"/>
    <lineage>
        <taxon>Bacteria</taxon>
        <taxon>Pseudomonadati</taxon>
        <taxon>Pseudomonadota</taxon>
        <taxon>Gammaproteobacteria</taxon>
        <taxon>Enterobacterales</taxon>
        <taxon>Enterobacteriaceae</taxon>
        <taxon>Escherichia</taxon>
    </lineage>
</organism>
<name>METAS_ECO7I</name>
<reference key="1">
    <citation type="journal article" date="2009" name="PLoS Genet.">
        <title>Organised genome dynamics in the Escherichia coli species results in highly diverse adaptive paths.</title>
        <authorList>
            <person name="Touchon M."/>
            <person name="Hoede C."/>
            <person name="Tenaillon O."/>
            <person name="Barbe V."/>
            <person name="Baeriswyl S."/>
            <person name="Bidet P."/>
            <person name="Bingen E."/>
            <person name="Bonacorsi S."/>
            <person name="Bouchier C."/>
            <person name="Bouvet O."/>
            <person name="Calteau A."/>
            <person name="Chiapello H."/>
            <person name="Clermont O."/>
            <person name="Cruveiller S."/>
            <person name="Danchin A."/>
            <person name="Diard M."/>
            <person name="Dossat C."/>
            <person name="Karoui M.E."/>
            <person name="Frapy E."/>
            <person name="Garry L."/>
            <person name="Ghigo J.M."/>
            <person name="Gilles A.M."/>
            <person name="Johnson J."/>
            <person name="Le Bouguenec C."/>
            <person name="Lescat M."/>
            <person name="Mangenot S."/>
            <person name="Martinez-Jehanne V."/>
            <person name="Matic I."/>
            <person name="Nassif X."/>
            <person name="Oztas S."/>
            <person name="Petit M.A."/>
            <person name="Pichon C."/>
            <person name="Rouy Z."/>
            <person name="Ruf C.S."/>
            <person name="Schneider D."/>
            <person name="Tourret J."/>
            <person name="Vacherie B."/>
            <person name="Vallenet D."/>
            <person name="Medigue C."/>
            <person name="Rocha E.P.C."/>
            <person name="Denamur E."/>
        </authorList>
    </citation>
    <scope>NUCLEOTIDE SEQUENCE [LARGE SCALE GENOMIC DNA]</scope>
    <source>
        <strain>IAI39 / ExPEC</strain>
    </source>
</reference>
<accession>B7NRU2</accession>
<keyword id="KW-0012">Acyltransferase</keyword>
<keyword id="KW-0028">Amino-acid biosynthesis</keyword>
<keyword id="KW-0963">Cytoplasm</keyword>
<keyword id="KW-0486">Methionine biosynthesis</keyword>
<keyword id="KW-0808">Transferase</keyword>
<protein>
    <recommendedName>
        <fullName evidence="1">Homoserine O-succinyltransferase</fullName>
        <shortName evidence="1">HST</shortName>
        <ecNumber evidence="1">2.3.1.46</ecNumber>
    </recommendedName>
    <alternativeName>
        <fullName evidence="1">Homoserine transsuccinylase</fullName>
        <shortName evidence="1">HTS</shortName>
    </alternativeName>
</protein>
<comment type="function">
    <text evidence="1">Transfers a succinyl group from succinyl-CoA to L-homoserine, forming succinyl-L-homoserine.</text>
</comment>
<comment type="catalytic activity">
    <reaction evidence="1">
        <text>L-homoserine + succinyl-CoA = O-succinyl-L-homoserine + CoA</text>
        <dbReference type="Rhea" id="RHEA:22008"/>
        <dbReference type="ChEBI" id="CHEBI:57287"/>
        <dbReference type="ChEBI" id="CHEBI:57292"/>
        <dbReference type="ChEBI" id="CHEBI:57476"/>
        <dbReference type="ChEBI" id="CHEBI:57661"/>
        <dbReference type="EC" id="2.3.1.46"/>
    </reaction>
</comment>
<comment type="pathway">
    <text evidence="1">Amino-acid biosynthesis; L-methionine biosynthesis via de novo pathway; O-succinyl-L-homoserine from L-homoserine: step 1/1.</text>
</comment>
<comment type="subunit">
    <text evidence="1">Homodimer.</text>
</comment>
<comment type="subcellular location">
    <subcellularLocation>
        <location evidence="1">Cytoplasm</location>
    </subcellularLocation>
</comment>
<comment type="similarity">
    <text evidence="1">Belongs to the MetA family.</text>
</comment>
<feature type="chain" id="PRO_1000119449" description="Homoserine O-succinyltransferase">
    <location>
        <begin position="1"/>
        <end position="309"/>
    </location>
</feature>
<feature type="active site" description="Acyl-thioester intermediate" evidence="1">
    <location>
        <position position="142"/>
    </location>
</feature>
<feature type="active site" description="Proton acceptor" evidence="1">
    <location>
        <position position="235"/>
    </location>
</feature>
<feature type="active site" evidence="1">
    <location>
        <position position="237"/>
    </location>
</feature>
<feature type="binding site" evidence="1">
    <location>
        <position position="163"/>
    </location>
    <ligand>
        <name>substrate</name>
    </ligand>
</feature>
<feature type="binding site" evidence="1">
    <location>
        <position position="192"/>
    </location>
    <ligand>
        <name>substrate</name>
    </ligand>
</feature>
<feature type="binding site" evidence="1">
    <location>
        <position position="249"/>
    </location>
    <ligand>
        <name>substrate</name>
    </ligand>
</feature>
<feature type="site" description="Important for acyl-CoA specificity" evidence="1">
    <location>
        <position position="111"/>
    </location>
</feature>
<feature type="site" description="Important for substrate specificity" evidence="1">
    <location>
        <position position="192"/>
    </location>
</feature>
<evidence type="ECO:0000255" key="1">
    <source>
        <dbReference type="HAMAP-Rule" id="MF_00295"/>
    </source>
</evidence>
<dbReference type="EC" id="2.3.1.46" evidence="1"/>
<dbReference type="EMBL" id="CU928164">
    <property type="protein sequence ID" value="CAR20505.1"/>
    <property type="molecule type" value="Genomic_DNA"/>
</dbReference>
<dbReference type="RefSeq" id="YP_002410273.1">
    <property type="nucleotide sequence ID" value="NC_011750.1"/>
</dbReference>
<dbReference type="SMR" id="B7NRU2"/>
<dbReference type="STRING" id="585057.ECIAI39_4399"/>
<dbReference type="KEGG" id="ect:ECIAI39_4399"/>
<dbReference type="PATRIC" id="fig|585057.6.peg.4546"/>
<dbReference type="HOGENOM" id="CLU_057851_0_1_6"/>
<dbReference type="UniPathway" id="UPA00051">
    <property type="reaction ID" value="UER00075"/>
</dbReference>
<dbReference type="Proteomes" id="UP000000749">
    <property type="component" value="Chromosome"/>
</dbReference>
<dbReference type="GO" id="GO:0005737">
    <property type="term" value="C:cytoplasm"/>
    <property type="evidence" value="ECO:0007669"/>
    <property type="project" value="UniProtKB-SubCell"/>
</dbReference>
<dbReference type="GO" id="GO:0004414">
    <property type="term" value="F:homoserine O-acetyltransferase activity"/>
    <property type="evidence" value="ECO:0007669"/>
    <property type="project" value="UniProtKB-UniRule"/>
</dbReference>
<dbReference type="GO" id="GO:0008899">
    <property type="term" value="F:homoserine O-succinyltransferase activity"/>
    <property type="evidence" value="ECO:0007669"/>
    <property type="project" value="UniProtKB-EC"/>
</dbReference>
<dbReference type="GO" id="GO:0019281">
    <property type="term" value="P:L-methionine biosynthetic process from homoserine via O-succinyl-L-homoserine and cystathionine"/>
    <property type="evidence" value="ECO:0007669"/>
    <property type="project" value="InterPro"/>
</dbReference>
<dbReference type="CDD" id="cd03131">
    <property type="entry name" value="GATase1_HTS"/>
    <property type="match status" value="1"/>
</dbReference>
<dbReference type="FunFam" id="3.40.50.880:FF:000004">
    <property type="entry name" value="Homoserine O-succinyltransferase"/>
    <property type="match status" value="1"/>
</dbReference>
<dbReference type="Gene3D" id="3.40.50.880">
    <property type="match status" value="1"/>
</dbReference>
<dbReference type="HAMAP" id="MF_00295">
    <property type="entry name" value="MetA_acyltransf"/>
    <property type="match status" value="1"/>
</dbReference>
<dbReference type="InterPro" id="IPR029062">
    <property type="entry name" value="Class_I_gatase-like"/>
</dbReference>
<dbReference type="InterPro" id="IPR005697">
    <property type="entry name" value="HST_MetA"/>
</dbReference>
<dbReference type="InterPro" id="IPR033752">
    <property type="entry name" value="MetA_family"/>
</dbReference>
<dbReference type="NCBIfam" id="TIGR01001">
    <property type="entry name" value="metA"/>
    <property type="match status" value="1"/>
</dbReference>
<dbReference type="PANTHER" id="PTHR20919">
    <property type="entry name" value="HOMOSERINE O-SUCCINYLTRANSFERASE"/>
    <property type="match status" value="1"/>
</dbReference>
<dbReference type="PANTHER" id="PTHR20919:SF0">
    <property type="entry name" value="HOMOSERINE O-SUCCINYLTRANSFERASE"/>
    <property type="match status" value="1"/>
</dbReference>
<dbReference type="Pfam" id="PF04204">
    <property type="entry name" value="HTS"/>
    <property type="match status" value="1"/>
</dbReference>
<dbReference type="PIRSF" id="PIRSF000450">
    <property type="entry name" value="H_ser_succinyltr"/>
    <property type="match status" value="1"/>
</dbReference>
<dbReference type="SUPFAM" id="SSF52317">
    <property type="entry name" value="Class I glutamine amidotransferase-like"/>
    <property type="match status" value="1"/>
</dbReference>
<sequence length="309" mass="35784">MPIRVPDELPAVNFLREENVFVMTTSRASGQEIRPLKVLILNLMPKKIETENQFLRLLSNSPLQVDIQLLRIDSRESRNTPAEHLNNFYCNFEDIQEQNFDGLIVTGAPLGLVEFNDVAYWPQIKQVLEWSKDHVTSTLFVCWAVQAALNILYGIPKQTRTDKLSGVYEHHILHPHALLTRGFDDSFLAPHSRYADFPAALIRDYTDLEILAETEEGDAYLFASKDKRIAFVTGHPEYDAQTLAQEYFRDVEAGLDPEVPYNYFPHNDPQNKPRASWRSHGNLLFTNWLNYYVYQITPYDLRHMNPTLD</sequence>
<gene>
    <name evidence="1" type="primary">metAS</name>
    <name type="ordered locus">ECIAI39_4399</name>
</gene>
<proteinExistence type="inferred from homology"/>